<dbReference type="EMBL" id="CP000800">
    <property type="protein sequence ID" value="ABV18122.1"/>
    <property type="molecule type" value="Genomic_DNA"/>
</dbReference>
<dbReference type="RefSeq" id="WP_000853883.1">
    <property type="nucleotide sequence ID" value="NC_009801.1"/>
</dbReference>
<dbReference type="SMR" id="A7ZNR4"/>
<dbReference type="KEGG" id="ecw:EcE24377A_2383"/>
<dbReference type="HOGENOM" id="CLU_053334_0_0_6"/>
<dbReference type="UniPathway" id="UPA00704">
    <property type="reaction ID" value="UER00716"/>
</dbReference>
<dbReference type="Proteomes" id="UP000001122">
    <property type="component" value="Chromosome"/>
</dbReference>
<dbReference type="GO" id="GO:0005886">
    <property type="term" value="C:plasma membrane"/>
    <property type="evidence" value="ECO:0007669"/>
    <property type="project" value="TreeGrafter"/>
</dbReference>
<dbReference type="GO" id="GO:2001059">
    <property type="term" value="P:D-tagatose 6-phosphate catabolic process"/>
    <property type="evidence" value="ECO:0007669"/>
    <property type="project" value="UniProtKB-UniRule"/>
</dbReference>
<dbReference type="GO" id="GO:0019402">
    <property type="term" value="P:galactitol metabolic process"/>
    <property type="evidence" value="ECO:0007669"/>
    <property type="project" value="UniProtKB-KW"/>
</dbReference>
<dbReference type="GO" id="GO:0009401">
    <property type="term" value="P:phosphoenolpyruvate-dependent sugar phosphotransferase system"/>
    <property type="evidence" value="ECO:0007669"/>
    <property type="project" value="TreeGrafter"/>
</dbReference>
<dbReference type="FunFam" id="3.20.20.70:FF:000141">
    <property type="entry name" value="D-tagatose-1,6-bisphosphate aldolase subunit GatZ"/>
    <property type="match status" value="1"/>
</dbReference>
<dbReference type="Gene3D" id="3.20.20.70">
    <property type="entry name" value="Aldolase class I"/>
    <property type="match status" value="1"/>
</dbReference>
<dbReference type="Gene3D" id="1.10.400.20">
    <property type="entry name" value="putative tagatose 6-phosphate kinase domain like"/>
    <property type="match status" value="1"/>
</dbReference>
<dbReference type="HAMAP" id="MF_01296">
    <property type="entry name" value="Tagatose_aldol_GatZ"/>
    <property type="match status" value="1"/>
</dbReference>
<dbReference type="InterPro" id="IPR013785">
    <property type="entry name" value="Aldolase_TIM"/>
</dbReference>
<dbReference type="InterPro" id="IPR012062">
    <property type="entry name" value="GatZ/KbaZ-like"/>
</dbReference>
<dbReference type="InterPro" id="IPR050303">
    <property type="entry name" value="GatZ_KbaZ_carbometab"/>
</dbReference>
<dbReference type="InterPro" id="IPR023436">
    <property type="entry name" value="TagBP_ald_GatZ"/>
</dbReference>
<dbReference type="NCBIfam" id="TIGR02810">
    <property type="entry name" value="agaZ_gatZ"/>
    <property type="match status" value="1"/>
</dbReference>
<dbReference type="NCBIfam" id="NF011626">
    <property type="entry name" value="PRK15052.1"/>
    <property type="match status" value="1"/>
</dbReference>
<dbReference type="PANTHER" id="PTHR32502:SF12">
    <property type="entry name" value="D-TAGATOSE-1,6-BISPHOSPHATE ALDOLASE SUBUNIT GATZ"/>
    <property type="match status" value="1"/>
</dbReference>
<dbReference type="PANTHER" id="PTHR32502">
    <property type="entry name" value="N-ACETYLGALACTOSAMINE PERMEASE II COMPONENT-RELATED"/>
    <property type="match status" value="1"/>
</dbReference>
<dbReference type="Pfam" id="PF08013">
    <property type="entry name" value="GatZ_KbaZ-like"/>
    <property type="match status" value="1"/>
</dbReference>
<dbReference type="PIRSF" id="PIRSF009264">
    <property type="entry name" value="TagBP_ald_AgaZ"/>
    <property type="match status" value="1"/>
</dbReference>
<dbReference type="SUPFAM" id="SSF51569">
    <property type="entry name" value="Aldolase"/>
    <property type="match status" value="1"/>
</dbReference>
<sequence>MKTLIARHKAGEHIGICSVCSAHPLVIEAALAFDRNSTRKVLIEATSNQVNQFGGYTGMTPADFREFVFTIADKVGFARERIILGGDHLGPNCWQQENADAAMEKSVELVKEYVRAGFSKIHLDASMSCAGDPIPLAPETVAERAAVLCFAAESVATDCQREQLSYVIGTEVPVPGGEASAIQSVHITHVEDAANTLRTHQKAFIARGLTEALTRVIAIVVQPGVEFDHSNIIHYQPQEAQPLAQWIENTRMVYEAHSTDYQTRTAYWELVRDHFAILKVGPALTFALREAIFALAQIEQELIAPENRSGCLAVIEEVMLDEPQYWKKYYRTGFNDSLLDIRYSLSDRIRYYWPHSRIKNSVETMMVNLEGVDIPLGMISQYLPKQFERIQSGELSAIPHQLIMDKIYDVLRAYRYGCAE</sequence>
<gene>
    <name evidence="1" type="primary">gatZ</name>
    <name type="ordered locus">EcE24377A_2383</name>
</gene>
<keyword id="KW-0298">Galactitol metabolism</keyword>
<keyword id="KW-1185">Reference proteome</keyword>
<proteinExistence type="inferred from homology"/>
<reference key="1">
    <citation type="journal article" date="2008" name="J. Bacteriol.">
        <title>The pangenome structure of Escherichia coli: comparative genomic analysis of E. coli commensal and pathogenic isolates.</title>
        <authorList>
            <person name="Rasko D.A."/>
            <person name="Rosovitz M.J."/>
            <person name="Myers G.S.A."/>
            <person name="Mongodin E.F."/>
            <person name="Fricke W.F."/>
            <person name="Gajer P."/>
            <person name="Crabtree J."/>
            <person name="Sebaihia M."/>
            <person name="Thomson N.R."/>
            <person name="Chaudhuri R."/>
            <person name="Henderson I.R."/>
            <person name="Sperandio V."/>
            <person name="Ravel J."/>
        </authorList>
    </citation>
    <scope>NUCLEOTIDE SEQUENCE [LARGE SCALE GENOMIC DNA]</scope>
    <source>
        <strain>E24377A / ETEC</strain>
    </source>
</reference>
<protein>
    <recommendedName>
        <fullName evidence="1">D-tagatose-1,6-bisphosphate aldolase subunit GatZ</fullName>
    </recommendedName>
</protein>
<evidence type="ECO:0000255" key="1">
    <source>
        <dbReference type="HAMAP-Rule" id="MF_01296"/>
    </source>
</evidence>
<feature type="chain" id="PRO_0000372496" description="D-tagatose-1,6-bisphosphate aldolase subunit GatZ">
    <location>
        <begin position="1"/>
        <end position="420"/>
    </location>
</feature>
<name>GATZ_ECO24</name>
<organism>
    <name type="scientific">Escherichia coli O139:H28 (strain E24377A / ETEC)</name>
    <dbReference type="NCBI Taxonomy" id="331111"/>
    <lineage>
        <taxon>Bacteria</taxon>
        <taxon>Pseudomonadati</taxon>
        <taxon>Pseudomonadota</taxon>
        <taxon>Gammaproteobacteria</taxon>
        <taxon>Enterobacterales</taxon>
        <taxon>Enterobacteriaceae</taxon>
        <taxon>Escherichia</taxon>
    </lineage>
</organism>
<accession>A7ZNR4</accession>
<comment type="function">
    <text evidence="1">Component of the tagatose-1,6-bisphosphate aldolase GatYZ that is required for full activity and stability of the Y subunit. Could have a chaperone-like function for the proper and stable folding of GatY. When expressed alone, GatZ does not show any aldolase activity. Is involved in the catabolism of galactitol.</text>
</comment>
<comment type="pathway">
    <text evidence="1">Carbohydrate metabolism; D-tagatose 6-phosphate degradation; D-glyceraldehyde 3-phosphate and glycerone phosphate from D-tagatose 6-phosphate: step 2/2.</text>
</comment>
<comment type="subunit">
    <text evidence="1">Forms a complex with GatY.</text>
</comment>
<comment type="similarity">
    <text evidence="1">Belongs to the GatZ/KbaZ family. GatZ subfamily.</text>
</comment>